<accession>P14334</accession>
<accession>Q7M6G5</accession>
<keyword id="KW-1015">Disulfide bond</keyword>
<keyword id="KW-0244">Early protein</keyword>
<keyword id="KW-0325">Glycoprotein</keyword>
<keyword id="KW-1038">Host endoplasmic reticulum</keyword>
<keyword id="KW-1043">Host membrane</keyword>
<keyword id="KW-0945">Host-virus interaction</keyword>
<keyword id="KW-0393">Immunoglobulin domain</keyword>
<keyword id="KW-1080">Inhibition of host adaptive immune response by virus</keyword>
<keyword id="KW-1107">Inhibition of host TAP by virus</keyword>
<keyword id="KW-0472">Membrane</keyword>
<keyword id="KW-1185">Reference proteome</keyword>
<keyword id="KW-0732">Signal</keyword>
<keyword id="KW-0812">Transmembrane</keyword>
<keyword id="KW-1133">Transmembrane helix</keyword>
<keyword id="KW-0899">Viral immunoevasion</keyword>
<comment type="function">
    <text evidence="3 5">Inhibits peptide loading of MHC class I molecules by transporters associated with antigen processing (TAP). Does not prevent peptide binding to TAP, but binds to the lumenal side of the TAP complex and inhibits peptide translocation by specifically blocking ATP-binding to TAP1, but not TAP2. Also prevents the conformational rearrangement of TAP induced by peptide binding. In consequence, infected cells are masked for immune recognition by cytotoxic T-lymphocytes.</text>
</comment>
<comment type="subunit">
    <text evidence="4">Interacts with UL18.</text>
</comment>
<comment type="subcellular location">
    <subcellularLocation>
        <location evidence="5">Host endoplasmic reticulum membrane</location>
        <topology evidence="5">Single-pass type I membrane protein</topology>
    </subcellularLocation>
</comment>
<comment type="developmental stage">
    <text>Expressed at early period of virus infection.</text>
</comment>
<comment type="domain">
    <text>The ER-lumenal domain is responsible for TAP inhibition. It is sufficient to inhibit ATP binding to TAP.</text>
</comment>
<comment type="similarity">
    <text evidence="6">Belongs to the cytomegalovirus US6 family.</text>
</comment>
<dbReference type="EMBL" id="X17403">
    <property type="protein sequence ID" value="CAA35273.1"/>
    <property type="molecule type" value="Genomic_DNA"/>
</dbReference>
<dbReference type="EMBL" id="X04650">
    <property type="protein sequence ID" value="CAB37098.1"/>
    <property type="molecule type" value="Genomic_DNA"/>
</dbReference>
<dbReference type="EMBL" id="BK000394">
    <property type="protein sequence ID" value="DAA00223.1"/>
    <property type="molecule type" value="Genomic_DNA"/>
</dbReference>
<dbReference type="PIR" id="G26078">
    <property type="entry name" value="QQBEC7"/>
</dbReference>
<dbReference type="SMR" id="P14334"/>
<dbReference type="GlyCosmos" id="P14334">
    <property type="glycosylation" value="1 site, No reported glycans"/>
</dbReference>
<dbReference type="Proteomes" id="UP000008991">
    <property type="component" value="Segment"/>
</dbReference>
<dbReference type="Proteomes" id="UP000008992">
    <property type="component" value="Segment"/>
</dbReference>
<dbReference type="GO" id="GO:0044167">
    <property type="term" value="C:host cell endoplasmic reticulum membrane"/>
    <property type="evidence" value="ECO:0000314"/>
    <property type="project" value="UniProt"/>
</dbReference>
<dbReference type="GO" id="GO:0016020">
    <property type="term" value="C:membrane"/>
    <property type="evidence" value="ECO:0007669"/>
    <property type="project" value="UniProtKB-KW"/>
</dbReference>
<dbReference type="GO" id="GO:0140313">
    <property type="term" value="F:molecular sequestering activity"/>
    <property type="evidence" value="ECO:0000314"/>
    <property type="project" value="UniProt"/>
</dbReference>
<dbReference type="GO" id="GO:0046776">
    <property type="term" value="P:symbiont-mediated suppression of host antigen processing and presentation of peptide antigen via MHC class I"/>
    <property type="evidence" value="ECO:0000314"/>
    <property type="project" value="UniProt"/>
</dbReference>
<dbReference type="InterPro" id="IPR035129">
    <property type="entry name" value="US6"/>
</dbReference>
<dbReference type="Pfam" id="PF17616">
    <property type="entry name" value="US6"/>
    <property type="match status" value="1"/>
</dbReference>
<feature type="signal peptide" evidence="2">
    <location>
        <begin position="1"/>
        <end position="19"/>
    </location>
</feature>
<feature type="chain" id="PRO_0000037438" description="Unique short US6 glycoprotein">
    <location>
        <begin position="20"/>
        <end position="183"/>
    </location>
</feature>
<feature type="topological domain" description="Lumenal" evidence="2">
    <location>
        <begin position="20"/>
        <end position="144"/>
    </location>
</feature>
<feature type="transmembrane region" description="Helical" evidence="2">
    <location>
        <begin position="145"/>
        <end position="165"/>
    </location>
</feature>
<feature type="topological domain" description="Cytoplasmic" evidence="2">
    <location>
        <begin position="166"/>
        <end position="183"/>
    </location>
</feature>
<feature type="domain" description="Ig-like H-type">
    <location>
        <begin position="30"/>
        <end position="131"/>
    </location>
</feature>
<feature type="glycosylation site" description="N-linked (GlcNAc...) asparagine; by host" evidence="2">
    <location>
        <position position="52"/>
    </location>
</feature>
<feature type="disulfide bond" evidence="1">
    <location>
        <begin position="39"/>
        <end position="127"/>
    </location>
</feature>
<protein>
    <recommendedName>
        <fullName>Unique short US6 glycoprotein</fullName>
    </recommendedName>
    <alternativeName>
        <fullName>Protein HXLF6</fullName>
    </alternativeName>
    <alternativeName>
        <fullName>gpUS6</fullName>
    </alternativeName>
</protein>
<organism>
    <name type="scientific">Human cytomegalovirus (strain AD169)</name>
    <name type="common">HHV-5</name>
    <name type="synonym">Human herpesvirus 5</name>
    <dbReference type="NCBI Taxonomy" id="10360"/>
    <lineage>
        <taxon>Viruses</taxon>
        <taxon>Duplodnaviria</taxon>
        <taxon>Heunggongvirae</taxon>
        <taxon>Peploviricota</taxon>
        <taxon>Herviviricetes</taxon>
        <taxon>Herpesvirales</taxon>
        <taxon>Orthoherpesviridae</taxon>
        <taxon>Betaherpesvirinae</taxon>
        <taxon>Cytomegalovirus</taxon>
        <taxon>Cytomegalovirus humanbeta5</taxon>
        <taxon>Human cytomegalovirus</taxon>
    </lineage>
</organism>
<reference key="1">
    <citation type="journal article" date="1986" name="J. Mol. Biol.">
        <title>Sequence of the short unique region, short repeats, and part of the long repeats of human cytomegalovirus.</title>
        <authorList>
            <person name="Weston K.M."/>
            <person name="Barrell B.G."/>
        </authorList>
    </citation>
    <scope>NUCLEOTIDE SEQUENCE [GENOMIC DNA]</scope>
</reference>
<reference key="2">
    <citation type="journal article" date="1990" name="Curr. Top. Microbiol. Immunol.">
        <title>Analysis of the protein-coding content of the sequence of human cytomegalovirus strain AD169.</title>
        <authorList>
            <person name="Chee M.S."/>
            <person name="Bankier A.T."/>
            <person name="Beck S."/>
            <person name="Bohni R."/>
            <person name="Brown C.M."/>
            <person name="Cerny R."/>
            <person name="Horsnell T."/>
            <person name="Hutchison C.A. III"/>
            <person name="Kouzarides T."/>
            <person name="Martignetti J.A."/>
            <person name="Preddie E."/>
            <person name="Satchwell S.C."/>
            <person name="Tomlinson P."/>
            <person name="Weston K.M."/>
            <person name="Barrell B.G."/>
        </authorList>
    </citation>
    <scope>NUCLEOTIDE SEQUENCE [LARGE SCALE GENOMIC DNA]</scope>
</reference>
<reference key="3">
    <citation type="journal article" date="2003" name="J. Gen. Virol.">
        <title>The human cytomegalovirus genome revisited: comparison with the chimpanzee cytomegalovirus genome.</title>
        <authorList>
            <person name="Davison A.J."/>
            <person name="Dolan A."/>
            <person name="Akter P."/>
            <person name="Addison C."/>
            <person name="Dargan D.J."/>
            <person name="Alcendor D.J."/>
            <person name="McGeoch D.J."/>
            <person name="Hayward G.S."/>
        </authorList>
    </citation>
    <scope>GENOME REANNOTATION</scope>
</reference>
<reference key="4">
    <citation type="journal article" date="2003" name="J. Gen. Virol.">
        <authorList>
            <person name="Davison A.J."/>
            <person name="Dolan A."/>
            <person name="Akter P."/>
            <person name="Addison C."/>
            <person name="Dargan D.J."/>
            <person name="Alcendor D.J."/>
            <person name="McGeoch D.J."/>
            <person name="Hayward G.S."/>
        </authorList>
    </citation>
    <scope>ERRATUM OF PUBMED:12533697</scope>
</reference>
<reference key="5">
    <citation type="journal article" date="1997" name="Immunity">
        <title>The ER-luminal domain of the HCMV glycoprotein US6 inhibits peptide translocation by TAP.</title>
        <authorList>
            <person name="Ahn K."/>
            <person name="Gruhler A."/>
            <person name="Galocha B."/>
            <person name="Jones T.R."/>
            <person name="Wiertz E.J.H.J."/>
            <person name="Ploegh H.L."/>
            <person name="Peterson P.A."/>
            <person name="Yang Y."/>
            <person name="Frueh K."/>
        </authorList>
    </citation>
    <scope>FUNCTION</scope>
    <scope>SUBCELLULAR LOCATION</scope>
</reference>
<reference key="6">
    <citation type="journal article" date="2001" name="EMBO J.">
        <title>The human cytomegalovirus gene product US6 inhibits ATP binding by TAP.</title>
        <authorList>
            <person name="Hewitt E.W."/>
            <person name="Gupta S.S."/>
            <person name="Lehner P.J."/>
        </authorList>
    </citation>
    <scope>FUNCTION</scope>
</reference>
<reference key="7">
    <citation type="journal article" date="2008" name="PLoS Pathog.">
        <title>Human cytomegalovirus UL18 utilizes US6 for evading the NK and T-cell responses.</title>
        <authorList>
            <person name="Kim Y."/>
            <person name="Park B."/>
            <person name="Cho S."/>
            <person name="Shin J."/>
            <person name="Cho K."/>
            <person name="Jun Y."/>
            <person name="Ahn K."/>
        </authorList>
    </citation>
    <scope>INTERACTION WITH UL18</scope>
</reference>
<evidence type="ECO:0000250" key="1"/>
<evidence type="ECO:0000255" key="2"/>
<evidence type="ECO:0000269" key="3">
    <source>
    </source>
</evidence>
<evidence type="ECO:0000269" key="4">
    <source>
    </source>
</evidence>
<evidence type="ECO:0000269" key="5">
    <source>
    </source>
</evidence>
<evidence type="ECO:0000305" key="6"/>
<proteinExistence type="evidence at protein level"/>
<organismHost>
    <name type="scientific">Homo sapiens</name>
    <name type="common">Human</name>
    <dbReference type="NCBI Taxonomy" id="9606"/>
</organismHost>
<gene>
    <name type="primary">US6</name>
</gene>
<name>US06_HCMVA</name>
<sequence>MDLLIRLGFLLMCALPTPGERSSRDPKTLLSLSPRQQACVPRTKSHRPVCYNDTGDCTDADDSWKQLGEDFAHQCLQAAKKRPKTHKSRPNDRNLEGRLTCQRVRRLLPCDLDIHPSHRLLTLMNNCVCDGAVWNAFRLIERHGFFAVTLYLCCGITLLVVILALLCSITYESTGRGIRRCGS</sequence>